<dbReference type="EC" id="3.5.1.18" evidence="1"/>
<dbReference type="EMBL" id="CP001279">
    <property type="protein sequence ID" value="ACM92285.1"/>
    <property type="molecule type" value="Genomic_DNA"/>
</dbReference>
<dbReference type="RefSeq" id="WP_012663657.1">
    <property type="nucleotide sequence ID" value="NC_012115.1"/>
</dbReference>
<dbReference type="SMR" id="B9L8Q2"/>
<dbReference type="STRING" id="598659.NAMH_0594"/>
<dbReference type="KEGG" id="nam:NAMH_0594"/>
<dbReference type="eggNOG" id="COG0624">
    <property type="taxonomic scope" value="Bacteria"/>
</dbReference>
<dbReference type="HOGENOM" id="CLU_021802_4_0_7"/>
<dbReference type="OrthoDB" id="5486471at2"/>
<dbReference type="UniPathway" id="UPA00034">
    <property type="reaction ID" value="UER00021"/>
</dbReference>
<dbReference type="Proteomes" id="UP000000448">
    <property type="component" value="Chromosome"/>
</dbReference>
<dbReference type="GO" id="GO:0008777">
    <property type="term" value="F:acetylornithine deacetylase activity"/>
    <property type="evidence" value="ECO:0007669"/>
    <property type="project" value="TreeGrafter"/>
</dbReference>
<dbReference type="GO" id="GO:0046872">
    <property type="term" value="F:metal ion binding"/>
    <property type="evidence" value="ECO:0007669"/>
    <property type="project" value="UniProtKB-KW"/>
</dbReference>
<dbReference type="GO" id="GO:0009014">
    <property type="term" value="F:succinyl-diaminopimelate desuccinylase activity"/>
    <property type="evidence" value="ECO:0007669"/>
    <property type="project" value="UniProtKB-EC"/>
</dbReference>
<dbReference type="GO" id="GO:0019877">
    <property type="term" value="P:diaminopimelate biosynthetic process"/>
    <property type="evidence" value="ECO:0007669"/>
    <property type="project" value="UniProtKB-KW"/>
</dbReference>
<dbReference type="GO" id="GO:0006526">
    <property type="term" value="P:L-arginine biosynthetic process"/>
    <property type="evidence" value="ECO:0007669"/>
    <property type="project" value="TreeGrafter"/>
</dbReference>
<dbReference type="GO" id="GO:0009089">
    <property type="term" value="P:lysine biosynthetic process via diaminopimelate"/>
    <property type="evidence" value="ECO:0007669"/>
    <property type="project" value="UniProtKB-UniPathway"/>
</dbReference>
<dbReference type="CDD" id="cd03891">
    <property type="entry name" value="M20_DapE_proteobac"/>
    <property type="match status" value="1"/>
</dbReference>
<dbReference type="Gene3D" id="3.40.630.10">
    <property type="entry name" value="Zn peptidases"/>
    <property type="match status" value="2"/>
</dbReference>
<dbReference type="HAMAP" id="MF_01690">
    <property type="entry name" value="DapE"/>
    <property type="match status" value="1"/>
</dbReference>
<dbReference type="InterPro" id="IPR036264">
    <property type="entry name" value="Bact_exopeptidase_dim_dom"/>
</dbReference>
<dbReference type="InterPro" id="IPR005941">
    <property type="entry name" value="DapE_proteobac"/>
</dbReference>
<dbReference type="InterPro" id="IPR002933">
    <property type="entry name" value="Peptidase_M20"/>
</dbReference>
<dbReference type="InterPro" id="IPR011650">
    <property type="entry name" value="Peptidase_M20_dimer"/>
</dbReference>
<dbReference type="InterPro" id="IPR050072">
    <property type="entry name" value="Peptidase_M20A"/>
</dbReference>
<dbReference type="NCBIfam" id="TIGR01246">
    <property type="entry name" value="dapE_proteo"/>
    <property type="match status" value="1"/>
</dbReference>
<dbReference type="NCBIfam" id="NF009557">
    <property type="entry name" value="PRK13009.1"/>
    <property type="match status" value="1"/>
</dbReference>
<dbReference type="PANTHER" id="PTHR43808">
    <property type="entry name" value="ACETYLORNITHINE DEACETYLASE"/>
    <property type="match status" value="1"/>
</dbReference>
<dbReference type="PANTHER" id="PTHR43808:SF31">
    <property type="entry name" value="N-ACETYL-L-CITRULLINE DEACETYLASE"/>
    <property type="match status" value="1"/>
</dbReference>
<dbReference type="Pfam" id="PF07687">
    <property type="entry name" value="M20_dimer"/>
    <property type="match status" value="1"/>
</dbReference>
<dbReference type="Pfam" id="PF01546">
    <property type="entry name" value="Peptidase_M20"/>
    <property type="match status" value="1"/>
</dbReference>
<dbReference type="SUPFAM" id="SSF55031">
    <property type="entry name" value="Bacterial exopeptidase dimerisation domain"/>
    <property type="match status" value="1"/>
</dbReference>
<dbReference type="SUPFAM" id="SSF53187">
    <property type="entry name" value="Zn-dependent exopeptidases"/>
    <property type="match status" value="1"/>
</dbReference>
<feature type="chain" id="PRO_0000375620" description="Succinyl-diaminopimelate desuccinylase">
    <location>
        <begin position="1"/>
        <end position="365"/>
    </location>
</feature>
<feature type="active site" evidence="1">
    <location>
        <position position="66"/>
    </location>
</feature>
<feature type="active site" description="Proton acceptor" evidence="1">
    <location>
        <position position="125"/>
    </location>
</feature>
<feature type="binding site" evidence="1">
    <location>
        <position position="64"/>
    </location>
    <ligand>
        <name>Zn(2+)</name>
        <dbReference type="ChEBI" id="CHEBI:29105"/>
        <label>1</label>
    </ligand>
</feature>
<feature type="binding site" evidence="1">
    <location>
        <position position="95"/>
    </location>
    <ligand>
        <name>Zn(2+)</name>
        <dbReference type="ChEBI" id="CHEBI:29105"/>
        <label>1</label>
    </ligand>
</feature>
<feature type="binding site" evidence="1">
    <location>
        <position position="95"/>
    </location>
    <ligand>
        <name>Zn(2+)</name>
        <dbReference type="ChEBI" id="CHEBI:29105"/>
        <label>2</label>
    </ligand>
</feature>
<feature type="binding site" evidence="1">
    <location>
        <position position="126"/>
    </location>
    <ligand>
        <name>Zn(2+)</name>
        <dbReference type="ChEBI" id="CHEBI:29105"/>
        <label>2</label>
    </ligand>
</feature>
<feature type="binding site" evidence="1">
    <location>
        <position position="154"/>
    </location>
    <ligand>
        <name>Zn(2+)</name>
        <dbReference type="ChEBI" id="CHEBI:29105"/>
        <label>1</label>
    </ligand>
</feature>
<feature type="binding site" evidence="1">
    <location>
        <position position="339"/>
    </location>
    <ligand>
        <name>Zn(2+)</name>
        <dbReference type="ChEBI" id="CHEBI:29105"/>
        <label>2</label>
    </ligand>
</feature>
<accession>B9L8Q2</accession>
<keyword id="KW-0028">Amino-acid biosynthesis</keyword>
<keyword id="KW-0170">Cobalt</keyword>
<keyword id="KW-0220">Diaminopimelate biosynthesis</keyword>
<keyword id="KW-0378">Hydrolase</keyword>
<keyword id="KW-0457">Lysine biosynthesis</keyword>
<keyword id="KW-0479">Metal-binding</keyword>
<keyword id="KW-0862">Zinc</keyword>
<protein>
    <recommendedName>
        <fullName evidence="1">Succinyl-diaminopimelate desuccinylase</fullName>
        <shortName evidence="1">SDAP desuccinylase</shortName>
        <ecNumber evidence="1">3.5.1.18</ecNumber>
    </recommendedName>
    <alternativeName>
        <fullName evidence="1">N-succinyl-LL-2,6-diaminoheptanedioate amidohydrolase</fullName>
    </alternativeName>
</protein>
<proteinExistence type="inferred from homology"/>
<organism>
    <name type="scientific">Nautilia profundicola (strain ATCC BAA-1463 / DSM 18972 / AmH)</name>
    <dbReference type="NCBI Taxonomy" id="598659"/>
    <lineage>
        <taxon>Bacteria</taxon>
        <taxon>Pseudomonadati</taxon>
        <taxon>Campylobacterota</taxon>
        <taxon>Epsilonproteobacteria</taxon>
        <taxon>Nautiliales</taxon>
        <taxon>Nautiliaceae</taxon>
        <taxon>Nautilia</taxon>
    </lineage>
</organism>
<comment type="function">
    <text evidence="1">Catalyzes the hydrolysis of N-succinyl-L,L-diaminopimelic acid (SDAP), forming succinate and LL-2,6-diaminopimelate (DAP), an intermediate involved in the bacterial biosynthesis of lysine and meso-diaminopimelic acid, an essential component of bacterial cell walls.</text>
</comment>
<comment type="catalytic activity">
    <reaction evidence="1">
        <text>N-succinyl-(2S,6S)-2,6-diaminopimelate + H2O = (2S,6S)-2,6-diaminopimelate + succinate</text>
        <dbReference type="Rhea" id="RHEA:22608"/>
        <dbReference type="ChEBI" id="CHEBI:15377"/>
        <dbReference type="ChEBI" id="CHEBI:30031"/>
        <dbReference type="ChEBI" id="CHEBI:57609"/>
        <dbReference type="ChEBI" id="CHEBI:58087"/>
        <dbReference type="EC" id="3.5.1.18"/>
    </reaction>
</comment>
<comment type="cofactor">
    <cofactor evidence="1">
        <name>Zn(2+)</name>
        <dbReference type="ChEBI" id="CHEBI:29105"/>
    </cofactor>
    <cofactor evidence="1">
        <name>Co(2+)</name>
        <dbReference type="ChEBI" id="CHEBI:48828"/>
    </cofactor>
    <text evidence="1">Binds 2 Zn(2+) or Co(2+) ions per subunit.</text>
</comment>
<comment type="pathway">
    <text evidence="1">Amino-acid biosynthesis; L-lysine biosynthesis via DAP pathway; LL-2,6-diaminopimelate from (S)-tetrahydrodipicolinate (succinylase route): step 3/3.</text>
</comment>
<comment type="subunit">
    <text evidence="1">Homodimer.</text>
</comment>
<comment type="similarity">
    <text evidence="1">Belongs to the peptidase M20A family. DapE subfamily.</text>
</comment>
<evidence type="ECO:0000255" key="1">
    <source>
        <dbReference type="HAMAP-Rule" id="MF_01690"/>
    </source>
</evidence>
<reference key="1">
    <citation type="journal article" date="2009" name="PLoS Genet.">
        <title>Adaptations to submarine hydrothermal environments exemplified by the genome of Nautilia profundicola.</title>
        <authorList>
            <person name="Campbell B.J."/>
            <person name="Smith J.L."/>
            <person name="Hanson T.E."/>
            <person name="Klotz M.G."/>
            <person name="Stein L.Y."/>
            <person name="Lee C.K."/>
            <person name="Wu D."/>
            <person name="Robinson J.M."/>
            <person name="Khouri H.M."/>
            <person name="Eisen J.A."/>
            <person name="Cary S.C."/>
        </authorList>
    </citation>
    <scope>NUCLEOTIDE SEQUENCE [LARGE SCALE GENOMIC DNA]</scope>
    <source>
        <strain>ATCC BAA-1463 / DSM 18972 / AmH</strain>
    </source>
</reference>
<name>DAPE_NAUPA</name>
<sequence>MNVIDLFKKLLSFKSVTPDDDGGMEFIKEYLKGFEVIESEKEGVKNLFIYKKFGEGDHLCFGGHIDVVPPGEGWNTDPFTPTEKEGFIYARGAQDMKSGLAAFLWAMKNAKNFKGTLSALITSDEEGDAVWGTKYMLEILKDKNLIPDYAIVAEPTCEKVFGDAIKIGRRGSINGVLKKIGLQGHAAYPEKSINPIHKVAQVLHKIAGVDLDDGDEFFAPSKFVVTDIRAGMEVTNVTPGELKMMFNVRNNTHTDKEKIKNFIHEHFKDMNYTLELKQSAEPFVTNPDTKVVKALDRAIKNHTNITPQHSTAGGTSDARFFAKHGVKVVEFGVKNDTIHAPNERTTPEEVNKLADIFKEVIEEWN</sequence>
<gene>
    <name evidence="1" type="primary">dapE</name>
    <name type="ordered locus">NAMH_0594</name>
</gene>